<proteinExistence type="evidence at protein level"/>
<gene>
    <name evidence="1" type="primary">MRI1</name>
    <name type="ordered locus">YPR118W</name>
    <name type="ORF">P9642.7</name>
</gene>
<accession>Q06489</accession>
<accession>D6W4B7</accession>
<keyword id="KW-0002">3D-structure</keyword>
<keyword id="KW-0007">Acetylation</keyword>
<keyword id="KW-0028">Amino-acid biosynthesis</keyword>
<keyword id="KW-0963">Cytoplasm</keyword>
<keyword id="KW-0413">Isomerase</keyword>
<keyword id="KW-0486">Methionine biosynthesis</keyword>
<keyword id="KW-0539">Nucleus</keyword>
<keyword id="KW-0597">Phosphoprotein</keyword>
<keyword id="KW-1185">Reference proteome</keyword>
<sequence length="411" mass="45020">MSLEAIVFDRSEPENVSVKVLDQLLLPYTTKYVPIHTIDDGYSVIKSMQVRGAPAIAIVGSLSVLTEVQLIKHNPTSDVATLYSLVNWESTKTVLNKRLDFLLSSRPTAVNLSNSLVEIKNILKSSSDLKAFDGSLYNYVCELIDEDLANNMKMGDNGAKYLIDVLQKDGFKDEFAVLTICNTGSLATSGYGTALGVIRSLWKDSLAKTDKADSGLDNEKCPRMGHVFPLETRPYNQGSRLTAYELVYDKIPSTLITDSSIAYRIRTSPIPIKAAFVGADRIVRNGDTANKIGTLQLAVICKQFGIKFFVVAPKTTIDNVTETGDDIIVEERNPEEFKVVTGTVINPENGSLILNESGEPITGKVGIAPLEINVWNPAFDITPHELIDGIITEEGVFTKNSSGEFQLESLF</sequence>
<comment type="function">
    <text evidence="1 4 5">Catalyzes the interconversion of methylthioribose-1-phosphate (MTR-1-P) into methylthioribulose-1-phosphate (MTRu-1-P).</text>
</comment>
<comment type="catalytic activity">
    <reaction evidence="1">
        <text>5-(methylsulfanyl)-alpha-D-ribose 1-phosphate = 5-(methylsulfanyl)-D-ribulose 1-phosphate</text>
        <dbReference type="Rhea" id="RHEA:19989"/>
        <dbReference type="ChEBI" id="CHEBI:58533"/>
        <dbReference type="ChEBI" id="CHEBI:58548"/>
        <dbReference type="EC" id="5.3.1.23"/>
    </reaction>
</comment>
<comment type="pathway">
    <text evidence="1">Amino-acid biosynthesis; L-methionine biosynthesis via salvage pathway; L-methionine from S-methyl-5-thio-alpha-D-ribose 1-phosphate: step 1/6.</text>
</comment>
<comment type="subunit">
    <text evidence="1 4">Homodimer.</text>
</comment>
<comment type="subcellular location">
    <subcellularLocation>
        <location evidence="1 2">Cytoplasm</location>
    </subcellularLocation>
    <subcellularLocation>
        <location evidence="1 2">Nucleus</location>
    </subcellularLocation>
</comment>
<comment type="miscellaneous">
    <text evidence="3">Present with 922 molecules/cell in log phase SD medium.</text>
</comment>
<comment type="similarity">
    <text evidence="1">Belongs to the eIF-2B alpha/beta/delta subunits family. MtnA subfamily.</text>
</comment>
<name>MTNA_YEAST</name>
<evidence type="ECO:0000255" key="1">
    <source>
        <dbReference type="HAMAP-Rule" id="MF_03119"/>
    </source>
</evidence>
<evidence type="ECO:0000269" key="2">
    <source>
    </source>
</evidence>
<evidence type="ECO:0000269" key="3">
    <source>
    </source>
</evidence>
<evidence type="ECO:0000269" key="4">
    <source>
    </source>
</evidence>
<evidence type="ECO:0000269" key="5">
    <source>
    </source>
</evidence>
<evidence type="ECO:0007744" key="6">
    <source>
    </source>
</evidence>
<evidence type="ECO:0007744" key="7">
    <source>
    </source>
</evidence>
<evidence type="ECO:0007829" key="8">
    <source>
        <dbReference type="PDB" id="1W2W"/>
    </source>
</evidence>
<dbReference type="EC" id="5.3.1.23" evidence="1"/>
<dbReference type="EMBL" id="U40828">
    <property type="protein sequence ID" value="AAB68059.1"/>
    <property type="molecule type" value="Genomic_DNA"/>
</dbReference>
<dbReference type="EMBL" id="BK006949">
    <property type="protein sequence ID" value="DAA11533.1"/>
    <property type="molecule type" value="Genomic_DNA"/>
</dbReference>
<dbReference type="PIR" id="S69011">
    <property type="entry name" value="S69011"/>
</dbReference>
<dbReference type="RefSeq" id="NP_015443.1">
    <property type="nucleotide sequence ID" value="NM_001184215.1"/>
</dbReference>
<dbReference type="PDB" id="1W2W">
    <property type="method" value="X-ray"/>
    <property type="resolution" value="1.75 A"/>
    <property type="chains" value="A/E/I/M=1-211, B/F/J/N=221-411"/>
</dbReference>
<dbReference type="PDBsum" id="1W2W"/>
<dbReference type="SMR" id="Q06489"/>
<dbReference type="BioGRID" id="36285">
    <property type="interactions" value="88"/>
</dbReference>
<dbReference type="DIP" id="DIP-4685N"/>
<dbReference type="FunCoup" id="Q06489">
    <property type="interactions" value="876"/>
</dbReference>
<dbReference type="IntAct" id="Q06489">
    <property type="interactions" value="2"/>
</dbReference>
<dbReference type="MINT" id="Q06489"/>
<dbReference type="STRING" id="4932.YPR118W"/>
<dbReference type="iPTMnet" id="Q06489"/>
<dbReference type="PaxDb" id="4932-YPR118W"/>
<dbReference type="PeptideAtlas" id="Q06489"/>
<dbReference type="EnsemblFungi" id="YPR118W_mRNA">
    <property type="protein sequence ID" value="YPR118W"/>
    <property type="gene ID" value="YPR118W"/>
</dbReference>
<dbReference type="GeneID" id="856234"/>
<dbReference type="KEGG" id="sce:YPR118W"/>
<dbReference type="AGR" id="SGD:S000006322"/>
<dbReference type="SGD" id="S000006322">
    <property type="gene designation" value="MRI1"/>
</dbReference>
<dbReference type="VEuPathDB" id="FungiDB:YPR118W"/>
<dbReference type="eggNOG" id="KOG1468">
    <property type="taxonomic scope" value="Eukaryota"/>
</dbReference>
<dbReference type="GeneTree" id="ENSGT00390000013732"/>
<dbReference type="HOGENOM" id="CLU_016218_1_3_1"/>
<dbReference type="InParanoid" id="Q06489"/>
<dbReference type="OMA" id="CETRPLN"/>
<dbReference type="OrthoDB" id="2461at2759"/>
<dbReference type="BioCyc" id="YEAST:G3O-34257-MONOMER"/>
<dbReference type="Reactome" id="R-SCE-1237112">
    <property type="pathway name" value="Methionine salvage pathway"/>
</dbReference>
<dbReference type="UniPathway" id="UPA00904">
    <property type="reaction ID" value="UER00874"/>
</dbReference>
<dbReference type="BioGRID-ORCS" id="856234">
    <property type="hits" value="2 hits in 10 CRISPR screens"/>
</dbReference>
<dbReference type="EvolutionaryTrace" id="Q06489"/>
<dbReference type="PRO" id="PR:Q06489"/>
<dbReference type="Proteomes" id="UP000002311">
    <property type="component" value="Chromosome XVI"/>
</dbReference>
<dbReference type="RNAct" id="Q06489">
    <property type="molecule type" value="protein"/>
</dbReference>
<dbReference type="GO" id="GO:0005737">
    <property type="term" value="C:cytoplasm"/>
    <property type="evidence" value="ECO:0007005"/>
    <property type="project" value="SGD"/>
</dbReference>
<dbReference type="GO" id="GO:0005634">
    <property type="term" value="C:nucleus"/>
    <property type="evidence" value="ECO:0007005"/>
    <property type="project" value="SGD"/>
</dbReference>
<dbReference type="GO" id="GO:0046523">
    <property type="term" value="F:S-methyl-5-thioribose-1-phosphate isomerase activity"/>
    <property type="evidence" value="ECO:0000314"/>
    <property type="project" value="SGD"/>
</dbReference>
<dbReference type="GO" id="GO:0019509">
    <property type="term" value="P:L-methionine salvage from methylthioadenosine"/>
    <property type="evidence" value="ECO:0000315"/>
    <property type="project" value="SGD"/>
</dbReference>
<dbReference type="FunFam" id="1.20.120.420:FF:000006">
    <property type="entry name" value="Methylthioribose-1-phosphate isomerase"/>
    <property type="match status" value="1"/>
</dbReference>
<dbReference type="FunFam" id="3.40.50.10470:FF:000026">
    <property type="entry name" value="Methylthioribose-1-phosphate isomerase"/>
    <property type="match status" value="1"/>
</dbReference>
<dbReference type="Gene3D" id="1.20.120.420">
    <property type="entry name" value="translation initiation factor eif-2b, domain 1"/>
    <property type="match status" value="1"/>
</dbReference>
<dbReference type="Gene3D" id="3.40.50.10470">
    <property type="entry name" value="Translation initiation factor eif-2b, domain 2"/>
    <property type="match status" value="1"/>
</dbReference>
<dbReference type="HAMAP" id="MF_01678">
    <property type="entry name" value="Salvage_MtnA"/>
    <property type="match status" value="1"/>
</dbReference>
<dbReference type="InterPro" id="IPR000649">
    <property type="entry name" value="IF-2B-related"/>
</dbReference>
<dbReference type="InterPro" id="IPR005251">
    <property type="entry name" value="IF-M1Pi"/>
</dbReference>
<dbReference type="InterPro" id="IPR042529">
    <property type="entry name" value="IF_2B-like_C"/>
</dbReference>
<dbReference type="InterPro" id="IPR011559">
    <property type="entry name" value="Initiation_fac_2B_a/b/d"/>
</dbReference>
<dbReference type="InterPro" id="IPR027363">
    <property type="entry name" value="M1Pi_N"/>
</dbReference>
<dbReference type="InterPro" id="IPR037171">
    <property type="entry name" value="NagB/RpiA_transferase-like"/>
</dbReference>
<dbReference type="NCBIfam" id="TIGR00524">
    <property type="entry name" value="eIF-2B_rel"/>
    <property type="match status" value="1"/>
</dbReference>
<dbReference type="NCBIfam" id="NF004326">
    <property type="entry name" value="PRK05720.1"/>
    <property type="match status" value="1"/>
</dbReference>
<dbReference type="NCBIfam" id="TIGR00512">
    <property type="entry name" value="salvage_mtnA"/>
    <property type="match status" value="1"/>
</dbReference>
<dbReference type="PANTHER" id="PTHR43475">
    <property type="entry name" value="METHYLTHIORIBOSE-1-PHOSPHATE ISOMERASE"/>
    <property type="match status" value="1"/>
</dbReference>
<dbReference type="PANTHER" id="PTHR43475:SF1">
    <property type="entry name" value="METHYLTHIORIBOSE-1-PHOSPHATE ISOMERASE"/>
    <property type="match status" value="1"/>
</dbReference>
<dbReference type="Pfam" id="PF01008">
    <property type="entry name" value="IF-2B"/>
    <property type="match status" value="1"/>
</dbReference>
<dbReference type="SUPFAM" id="SSF100950">
    <property type="entry name" value="NagB/RpiA/CoA transferase-like"/>
    <property type="match status" value="1"/>
</dbReference>
<reference key="1">
    <citation type="journal article" date="1997" name="Nature">
        <title>The nucleotide sequence of Saccharomyces cerevisiae chromosome XVI.</title>
        <authorList>
            <person name="Bussey H."/>
            <person name="Storms R.K."/>
            <person name="Ahmed A."/>
            <person name="Albermann K."/>
            <person name="Allen E."/>
            <person name="Ansorge W."/>
            <person name="Araujo R."/>
            <person name="Aparicio A."/>
            <person name="Barrell B.G."/>
            <person name="Badcock K."/>
            <person name="Benes V."/>
            <person name="Botstein D."/>
            <person name="Bowman S."/>
            <person name="Brueckner M."/>
            <person name="Carpenter J."/>
            <person name="Cherry J.M."/>
            <person name="Chung E."/>
            <person name="Churcher C.M."/>
            <person name="Coster F."/>
            <person name="Davis K."/>
            <person name="Davis R.W."/>
            <person name="Dietrich F.S."/>
            <person name="Delius H."/>
            <person name="DiPaolo T."/>
            <person name="Dubois E."/>
            <person name="Duesterhoeft A."/>
            <person name="Duncan M."/>
            <person name="Floeth M."/>
            <person name="Fortin N."/>
            <person name="Friesen J.D."/>
            <person name="Fritz C."/>
            <person name="Goffeau A."/>
            <person name="Hall J."/>
            <person name="Hebling U."/>
            <person name="Heumann K."/>
            <person name="Hilbert H."/>
            <person name="Hillier L.W."/>
            <person name="Hunicke-Smith S."/>
            <person name="Hyman R.W."/>
            <person name="Johnston M."/>
            <person name="Kalman S."/>
            <person name="Kleine K."/>
            <person name="Komp C."/>
            <person name="Kurdi O."/>
            <person name="Lashkari D."/>
            <person name="Lew H."/>
            <person name="Lin A."/>
            <person name="Lin D."/>
            <person name="Louis E.J."/>
            <person name="Marathe R."/>
            <person name="Messenguy F."/>
            <person name="Mewes H.-W."/>
            <person name="Mirtipati S."/>
            <person name="Moestl D."/>
            <person name="Mueller-Auer S."/>
            <person name="Namath A."/>
            <person name="Nentwich U."/>
            <person name="Oefner P."/>
            <person name="Pearson D."/>
            <person name="Petel F.X."/>
            <person name="Pohl T.M."/>
            <person name="Purnelle B."/>
            <person name="Rajandream M.A."/>
            <person name="Rechmann S."/>
            <person name="Rieger M."/>
            <person name="Riles L."/>
            <person name="Roberts D."/>
            <person name="Schaefer M."/>
            <person name="Scharfe M."/>
            <person name="Scherens B."/>
            <person name="Schramm S."/>
            <person name="Schroeder M."/>
            <person name="Sdicu A.-M."/>
            <person name="Tettelin H."/>
            <person name="Urrestarazu L.A."/>
            <person name="Ushinsky S."/>
            <person name="Vierendeels F."/>
            <person name="Vissers S."/>
            <person name="Voss H."/>
            <person name="Walsh S.V."/>
            <person name="Wambutt R."/>
            <person name="Wang Y."/>
            <person name="Wedler E."/>
            <person name="Wedler H."/>
            <person name="Winnett E."/>
            <person name="Zhong W.-W."/>
            <person name="Zollner A."/>
            <person name="Vo D.H."/>
            <person name="Hani J."/>
        </authorList>
    </citation>
    <scope>NUCLEOTIDE SEQUENCE [LARGE SCALE GENOMIC DNA]</scope>
    <source>
        <strain>ATCC 204508 / S288c</strain>
    </source>
</reference>
<reference key="2">
    <citation type="journal article" date="2014" name="G3 (Bethesda)">
        <title>The reference genome sequence of Saccharomyces cerevisiae: Then and now.</title>
        <authorList>
            <person name="Engel S.R."/>
            <person name="Dietrich F.S."/>
            <person name="Fisk D.G."/>
            <person name="Binkley G."/>
            <person name="Balakrishnan R."/>
            <person name="Costanzo M.C."/>
            <person name="Dwight S.S."/>
            <person name="Hitz B.C."/>
            <person name="Karra K."/>
            <person name="Nash R.S."/>
            <person name="Weng S."/>
            <person name="Wong E.D."/>
            <person name="Lloyd P."/>
            <person name="Skrzypek M.S."/>
            <person name="Miyasato S.R."/>
            <person name="Simison M."/>
            <person name="Cherry J.M."/>
        </authorList>
    </citation>
    <scope>GENOME REANNOTATION</scope>
    <source>
        <strain>ATCC 204508 / S288c</strain>
    </source>
</reference>
<reference key="3">
    <citation type="journal article" date="2003" name="Nature">
        <title>Global analysis of protein localization in budding yeast.</title>
        <authorList>
            <person name="Huh W.-K."/>
            <person name="Falvo J.V."/>
            <person name="Gerke L.C."/>
            <person name="Carroll A.S."/>
            <person name="Howson R.W."/>
            <person name="Weissman J.S."/>
            <person name="O'Shea E.K."/>
        </authorList>
    </citation>
    <scope>SUBCELLULAR LOCATION [LARGE SCALE ANALYSIS]</scope>
</reference>
<reference key="4">
    <citation type="journal article" date="2003" name="Nature">
        <title>Global analysis of protein expression in yeast.</title>
        <authorList>
            <person name="Ghaemmaghami S."/>
            <person name="Huh W.-K."/>
            <person name="Bower K."/>
            <person name="Howson R.W."/>
            <person name="Belle A."/>
            <person name="Dephoure N."/>
            <person name="O'Shea E.K."/>
            <person name="Weissman J.S."/>
        </authorList>
    </citation>
    <scope>LEVEL OF PROTEIN EXPRESSION [LARGE SCALE ANALYSIS]</scope>
</reference>
<reference key="5">
    <citation type="journal article" date="2008" name="FEBS J.">
        <title>A complete inventory of all enzymes in the eukaryotic methionine salvage pathway.</title>
        <authorList>
            <person name="Pirkov I."/>
            <person name="Norbeck J."/>
            <person name="Gustafsson L."/>
            <person name="Albers E."/>
        </authorList>
    </citation>
    <scope>FUNCTION</scope>
</reference>
<reference key="6">
    <citation type="journal article" date="2008" name="Mol. Cell. Proteomics">
        <title>A multidimensional chromatography technology for in-depth phosphoproteome analysis.</title>
        <authorList>
            <person name="Albuquerque C.P."/>
            <person name="Smolka M.B."/>
            <person name="Payne S.H."/>
            <person name="Bafna V."/>
            <person name="Eng J."/>
            <person name="Zhou H."/>
        </authorList>
    </citation>
    <scope>PHOSPHORYLATION [LARGE SCALE ANALYSIS] AT SER-351</scope>
    <scope>IDENTIFICATION BY MASS SPECTROMETRY [LARGE SCALE ANALYSIS]</scope>
</reference>
<reference key="7">
    <citation type="journal article" date="2012" name="Proc. Natl. Acad. Sci. U.S.A.">
        <title>N-terminal acetylome analyses and functional insights of the N-terminal acetyltransferase NatB.</title>
        <authorList>
            <person name="Van Damme P."/>
            <person name="Lasa M."/>
            <person name="Polevoda B."/>
            <person name="Gazquez C."/>
            <person name="Elosegui-Artola A."/>
            <person name="Kim D.S."/>
            <person name="De Juan-Pardo E."/>
            <person name="Demeyer K."/>
            <person name="Hole K."/>
            <person name="Larrea E."/>
            <person name="Timmerman E."/>
            <person name="Prieto J."/>
            <person name="Arnesen T."/>
            <person name="Sherman F."/>
            <person name="Gevaert K."/>
            <person name="Aldabe R."/>
        </authorList>
    </citation>
    <scope>ACETYLATION [LARGE SCALE ANALYSIS] AT SER-2</scope>
    <scope>CLEAVAGE OF INITIATOR METHIONINE [LARGE SCALE ANALYSIS]</scope>
    <scope>IDENTIFICATION BY MASS SPECTROMETRY [LARGE SCALE ANALYSIS]</scope>
</reference>
<reference key="8">
    <citation type="journal article" date="2004" name="J. Biol. Chem.">
        <title>Crystal structure of yeast Ypr118w, a methylthioribose-1-phosphate isomerase related to regulatory eIF2B subunits.</title>
        <authorList>
            <person name="Bumann M."/>
            <person name="Djafarzadeh S."/>
            <person name="Oberholzer A.E."/>
            <person name="Bigler P."/>
            <person name="Altmann M."/>
            <person name="Trachsel H."/>
            <person name="Baumann U."/>
        </authorList>
    </citation>
    <scope>X-RAY CRYSTALLOGRAPHY (1.75 ANGSTROMS)</scope>
    <scope>SUBUNIT</scope>
    <scope>FUNCTION</scope>
</reference>
<organism>
    <name type="scientific">Saccharomyces cerevisiae (strain ATCC 204508 / S288c)</name>
    <name type="common">Baker's yeast</name>
    <dbReference type="NCBI Taxonomy" id="559292"/>
    <lineage>
        <taxon>Eukaryota</taxon>
        <taxon>Fungi</taxon>
        <taxon>Dikarya</taxon>
        <taxon>Ascomycota</taxon>
        <taxon>Saccharomycotina</taxon>
        <taxon>Saccharomycetes</taxon>
        <taxon>Saccharomycetales</taxon>
        <taxon>Saccharomycetaceae</taxon>
        <taxon>Saccharomyces</taxon>
    </lineage>
</organism>
<feature type="initiator methionine" description="Removed" evidence="7">
    <location>
        <position position="1"/>
    </location>
</feature>
<feature type="chain" id="PRO_0000156110" description="Methylthioribose-1-phosphate isomerase">
    <location>
        <begin position="2"/>
        <end position="411"/>
    </location>
</feature>
<feature type="active site" description="Proton donor" evidence="1">
    <location>
        <position position="280"/>
    </location>
</feature>
<feature type="site" description="Transition state stabilizer" evidence="1">
    <location>
        <position position="181"/>
    </location>
</feature>
<feature type="modified residue" description="N-acetylserine" evidence="7">
    <location>
        <position position="2"/>
    </location>
</feature>
<feature type="modified residue" description="Phosphoserine" evidence="6">
    <location>
        <position position="351"/>
    </location>
</feature>
<feature type="strand" evidence="8">
    <location>
        <begin position="5"/>
        <end position="9"/>
    </location>
</feature>
<feature type="strand" evidence="8">
    <location>
        <begin position="17"/>
        <end position="21"/>
    </location>
</feature>
<feature type="turn" evidence="8">
    <location>
        <begin position="23"/>
        <end position="28"/>
    </location>
</feature>
<feature type="strand" evidence="8">
    <location>
        <begin position="32"/>
        <end position="34"/>
    </location>
</feature>
<feature type="helix" evidence="8">
    <location>
        <begin position="38"/>
        <end position="46"/>
    </location>
</feature>
<feature type="helix" evidence="8">
    <location>
        <begin position="53"/>
        <end position="73"/>
    </location>
</feature>
<feature type="helix" evidence="8">
    <location>
        <begin position="79"/>
        <end position="82"/>
    </location>
</feature>
<feature type="helix" evidence="8">
    <location>
        <begin position="88"/>
        <end position="103"/>
    </location>
</feature>
<feature type="helix" evidence="8">
    <location>
        <begin position="111"/>
        <end position="124"/>
    </location>
</feature>
<feature type="helix" evidence="8">
    <location>
        <begin position="129"/>
        <end position="168"/>
    </location>
</feature>
<feature type="strand" evidence="8">
    <location>
        <begin position="173"/>
        <end position="179"/>
    </location>
</feature>
<feature type="helix" evidence="8">
    <location>
        <begin position="185"/>
        <end position="187"/>
    </location>
</feature>
<feature type="strand" evidence="8">
    <location>
        <begin position="188"/>
        <end position="191"/>
    </location>
</feature>
<feature type="helix" evidence="8">
    <location>
        <begin position="194"/>
        <end position="210"/>
    </location>
</feature>
<feature type="strand" evidence="8">
    <location>
        <begin position="223"/>
        <end position="230"/>
    </location>
</feature>
<feature type="turn" evidence="8">
    <location>
        <begin position="233"/>
        <end position="236"/>
    </location>
</feature>
<feature type="helix" evidence="8">
    <location>
        <begin position="237"/>
        <end position="240"/>
    </location>
</feature>
<feature type="helix" evidence="8">
    <location>
        <begin position="242"/>
        <end position="249"/>
    </location>
</feature>
<feature type="strand" evidence="8">
    <location>
        <begin position="253"/>
        <end position="256"/>
    </location>
</feature>
<feature type="helix" evidence="8">
    <location>
        <begin position="258"/>
        <end position="260"/>
    </location>
</feature>
<feature type="helix" evidence="8">
    <location>
        <begin position="261"/>
        <end position="267"/>
    </location>
</feature>
<feature type="strand" evidence="8">
    <location>
        <begin position="272"/>
        <end position="277"/>
    </location>
</feature>
<feature type="strand" evidence="8">
    <location>
        <begin position="280"/>
        <end position="282"/>
    </location>
</feature>
<feature type="strand" evidence="8">
    <location>
        <begin position="288"/>
        <end position="291"/>
    </location>
</feature>
<feature type="helix" evidence="8">
    <location>
        <begin position="294"/>
        <end position="304"/>
    </location>
</feature>
<feature type="strand" evidence="8">
    <location>
        <begin position="307"/>
        <end position="311"/>
    </location>
</feature>
<feature type="helix" evidence="8">
    <location>
        <begin position="314"/>
        <end position="316"/>
    </location>
</feature>
<feature type="helix" evidence="8">
    <location>
        <begin position="324"/>
        <end position="326"/>
    </location>
</feature>
<feature type="helix" evidence="8">
    <location>
        <begin position="335"/>
        <end position="338"/>
    </location>
</feature>
<feature type="strand" evidence="8">
    <location>
        <begin position="339"/>
        <end position="345"/>
    </location>
</feature>
<feature type="turn" evidence="8">
    <location>
        <begin position="347"/>
        <end position="349"/>
    </location>
</feature>
<feature type="strand" evidence="8">
    <location>
        <begin position="362"/>
        <end position="366"/>
    </location>
</feature>
<feature type="strand" evidence="8">
    <location>
        <begin position="377"/>
        <end position="382"/>
    </location>
</feature>
<feature type="helix" evidence="8">
    <location>
        <begin position="384"/>
        <end position="386"/>
    </location>
</feature>
<feature type="strand" evidence="8">
    <location>
        <begin position="388"/>
        <end position="392"/>
    </location>
</feature>
<feature type="strand" evidence="8">
    <location>
        <begin position="395"/>
        <end position="397"/>
    </location>
</feature>
<feature type="helix" evidence="8">
    <location>
        <begin position="408"/>
        <end position="410"/>
    </location>
</feature>
<protein>
    <recommendedName>
        <fullName evidence="1">Methylthioribose-1-phosphate isomerase</fullName>
        <shortName evidence="1">M1Pi</shortName>
        <shortName evidence="1">MTR-1-P isomerase</shortName>
        <ecNumber evidence="1">5.3.1.23</ecNumber>
    </recommendedName>
    <alternativeName>
        <fullName evidence="1">S-methyl-5-thioribose-1-phosphate isomerase</fullName>
    </alternativeName>
    <alternativeName>
        <fullName evidence="1">Translation initiation factor eIF-2B subunit alpha/beta/delta-like protein</fullName>
    </alternativeName>
</protein>